<reference key="1">
    <citation type="journal article" date="2008" name="Genome Biol.">
        <title>The complete genome, comparative and functional analysis of Stenotrophomonas maltophilia reveals an organism heavily shielded by drug resistance determinants.</title>
        <authorList>
            <person name="Crossman L.C."/>
            <person name="Gould V.C."/>
            <person name="Dow J.M."/>
            <person name="Vernikos G.S."/>
            <person name="Okazaki A."/>
            <person name="Sebaihia M."/>
            <person name="Saunders D."/>
            <person name="Arrowsmith C."/>
            <person name="Carver T."/>
            <person name="Peters N."/>
            <person name="Adlem E."/>
            <person name="Kerhornou A."/>
            <person name="Lord A."/>
            <person name="Murphy L."/>
            <person name="Seeger K."/>
            <person name="Squares R."/>
            <person name="Rutter S."/>
            <person name="Quail M.A."/>
            <person name="Rajandream M.A."/>
            <person name="Harris D."/>
            <person name="Churcher C."/>
            <person name="Bentley S.D."/>
            <person name="Parkhill J."/>
            <person name="Thomson N.R."/>
            <person name="Avison M.B."/>
        </authorList>
    </citation>
    <scope>NUCLEOTIDE SEQUENCE [LARGE SCALE GENOMIC DNA]</scope>
    <source>
        <strain>K279a</strain>
    </source>
</reference>
<dbReference type="EMBL" id="AM743169">
    <property type="protein sequence ID" value="CAQ44309.1"/>
    <property type="molecule type" value="Genomic_DNA"/>
</dbReference>
<dbReference type="RefSeq" id="WP_012479139.1">
    <property type="nucleotide sequence ID" value="NC_010943.1"/>
</dbReference>
<dbReference type="SMR" id="B2FNL4"/>
<dbReference type="EnsemblBacteria" id="CAQ44309">
    <property type="protein sequence ID" value="CAQ44309"/>
    <property type="gene ID" value="Smlt0730"/>
</dbReference>
<dbReference type="KEGG" id="sml:Smlt0730"/>
<dbReference type="eggNOG" id="COG0781">
    <property type="taxonomic scope" value="Bacteria"/>
</dbReference>
<dbReference type="HOGENOM" id="CLU_087843_4_1_6"/>
<dbReference type="Proteomes" id="UP000008840">
    <property type="component" value="Chromosome"/>
</dbReference>
<dbReference type="GO" id="GO:0005829">
    <property type="term" value="C:cytosol"/>
    <property type="evidence" value="ECO:0007669"/>
    <property type="project" value="TreeGrafter"/>
</dbReference>
<dbReference type="GO" id="GO:0003723">
    <property type="term" value="F:RNA binding"/>
    <property type="evidence" value="ECO:0007669"/>
    <property type="project" value="UniProtKB-UniRule"/>
</dbReference>
<dbReference type="GO" id="GO:0006353">
    <property type="term" value="P:DNA-templated transcription termination"/>
    <property type="evidence" value="ECO:0007669"/>
    <property type="project" value="UniProtKB-UniRule"/>
</dbReference>
<dbReference type="GO" id="GO:0031564">
    <property type="term" value="P:transcription antitermination"/>
    <property type="evidence" value="ECO:0007669"/>
    <property type="project" value="UniProtKB-KW"/>
</dbReference>
<dbReference type="CDD" id="cd00619">
    <property type="entry name" value="Terminator_NusB"/>
    <property type="match status" value="1"/>
</dbReference>
<dbReference type="FunFam" id="1.10.940.10:FF:000001">
    <property type="entry name" value="Transcription antitermination factor NusB"/>
    <property type="match status" value="1"/>
</dbReference>
<dbReference type="Gene3D" id="1.10.940.10">
    <property type="entry name" value="NusB-like"/>
    <property type="match status" value="1"/>
</dbReference>
<dbReference type="HAMAP" id="MF_00073">
    <property type="entry name" value="NusB"/>
    <property type="match status" value="1"/>
</dbReference>
<dbReference type="InterPro" id="IPR035926">
    <property type="entry name" value="NusB-like_sf"/>
</dbReference>
<dbReference type="InterPro" id="IPR011605">
    <property type="entry name" value="NusB_fam"/>
</dbReference>
<dbReference type="InterPro" id="IPR006027">
    <property type="entry name" value="NusB_RsmB_TIM44"/>
</dbReference>
<dbReference type="NCBIfam" id="TIGR01951">
    <property type="entry name" value="nusB"/>
    <property type="match status" value="1"/>
</dbReference>
<dbReference type="PANTHER" id="PTHR11078:SF3">
    <property type="entry name" value="ANTITERMINATION NUSB DOMAIN-CONTAINING PROTEIN"/>
    <property type="match status" value="1"/>
</dbReference>
<dbReference type="PANTHER" id="PTHR11078">
    <property type="entry name" value="N UTILIZATION SUBSTANCE PROTEIN B-RELATED"/>
    <property type="match status" value="1"/>
</dbReference>
<dbReference type="Pfam" id="PF01029">
    <property type="entry name" value="NusB"/>
    <property type="match status" value="1"/>
</dbReference>
<dbReference type="SUPFAM" id="SSF48013">
    <property type="entry name" value="NusB-like"/>
    <property type="match status" value="1"/>
</dbReference>
<organism>
    <name type="scientific">Stenotrophomonas maltophilia (strain K279a)</name>
    <dbReference type="NCBI Taxonomy" id="522373"/>
    <lineage>
        <taxon>Bacteria</taxon>
        <taxon>Pseudomonadati</taxon>
        <taxon>Pseudomonadota</taxon>
        <taxon>Gammaproteobacteria</taxon>
        <taxon>Lysobacterales</taxon>
        <taxon>Lysobacteraceae</taxon>
        <taxon>Stenotrophomonas</taxon>
        <taxon>Stenotrophomonas maltophilia group</taxon>
    </lineage>
</organism>
<protein>
    <recommendedName>
        <fullName evidence="1">Transcription antitermination protein NusB</fullName>
    </recommendedName>
    <alternativeName>
        <fullName evidence="1">Antitermination factor NusB</fullName>
    </alternativeName>
</protein>
<sequence length="159" mass="17949">MNKNTQGKPSGKPVRRDGVDPVLRSRARRRAVQAIYAWQISGGNAQSLIAQFAHEQAREIADLAYFEALLHGVLDNRRDIDEALGPYLDRGIEEVDAIERAVLRLAGYELRYRLDVPYRVVINEAIESAKRFGSEHGHTYVNGVLDRAAVEWRKVESGH</sequence>
<proteinExistence type="inferred from homology"/>
<name>NUSB_STRMK</name>
<gene>
    <name evidence="1" type="primary">nusB</name>
    <name type="ordered locus">Smlt0730</name>
</gene>
<feature type="chain" id="PRO_1000092591" description="Transcription antitermination protein NusB">
    <location>
        <begin position="1"/>
        <end position="159"/>
    </location>
</feature>
<comment type="function">
    <text evidence="1">Involved in transcription antitermination. Required for transcription of ribosomal RNA (rRNA) genes. Binds specifically to the boxA antiterminator sequence of the ribosomal RNA (rrn) operons.</text>
</comment>
<comment type="similarity">
    <text evidence="1">Belongs to the NusB family.</text>
</comment>
<accession>B2FNL4</accession>
<keyword id="KW-1185">Reference proteome</keyword>
<keyword id="KW-0694">RNA-binding</keyword>
<keyword id="KW-0804">Transcription</keyword>
<keyword id="KW-0889">Transcription antitermination</keyword>
<keyword id="KW-0805">Transcription regulation</keyword>
<evidence type="ECO:0000255" key="1">
    <source>
        <dbReference type="HAMAP-Rule" id="MF_00073"/>
    </source>
</evidence>